<feature type="signal peptide" evidence="1">
    <location>
        <begin position="1"/>
        <end position="19"/>
    </location>
</feature>
<feature type="chain" id="PRO_0000295685" description="Nephronectin">
    <location>
        <begin position="20"/>
        <end position="561"/>
    </location>
</feature>
<feature type="domain" description="EGF-like 1" evidence="2">
    <location>
        <begin position="52"/>
        <end position="87"/>
    </location>
</feature>
<feature type="domain" description="EGF-like 2; calcium-binding" evidence="2">
    <location>
        <begin position="89"/>
        <end position="128"/>
    </location>
</feature>
<feature type="domain" description="EGF-like 3" evidence="2">
    <location>
        <begin position="132"/>
        <end position="168"/>
    </location>
</feature>
<feature type="domain" description="EGF-like 4; calcium-binding" evidence="2">
    <location>
        <begin position="169"/>
        <end position="213"/>
    </location>
</feature>
<feature type="domain" description="EGF-like 5; calcium-binding" evidence="2">
    <location>
        <begin position="214"/>
        <end position="254"/>
    </location>
</feature>
<feature type="domain" description="MAM" evidence="3">
    <location>
        <begin position="420"/>
        <end position="561"/>
    </location>
</feature>
<feature type="region of interest" description="Disordered" evidence="4">
    <location>
        <begin position="266"/>
        <end position="370"/>
    </location>
</feature>
<feature type="short sequence motif" description="Integrin interaction">
    <location>
        <begin position="382"/>
        <end position="384"/>
    </location>
</feature>
<feature type="compositionally biased region" description="Low complexity" evidence="4">
    <location>
        <begin position="307"/>
        <end position="316"/>
    </location>
</feature>
<feature type="compositionally biased region" description="Pro residues" evidence="4">
    <location>
        <begin position="317"/>
        <end position="348"/>
    </location>
</feature>
<feature type="compositionally biased region" description="Low complexity" evidence="4">
    <location>
        <begin position="352"/>
        <end position="366"/>
    </location>
</feature>
<feature type="disulfide bond" evidence="2">
    <location>
        <begin position="56"/>
        <end position="69"/>
    </location>
</feature>
<feature type="disulfide bond" evidence="2">
    <location>
        <begin position="60"/>
        <end position="75"/>
    </location>
</feature>
<feature type="disulfide bond" evidence="2">
    <location>
        <begin position="77"/>
        <end position="86"/>
    </location>
</feature>
<feature type="disulfide bond" evidence="2">
    <location>
        <begin position="93"/>
        <end position="104"/>
    </location>
</feature>
<feature type="disulfide bond" evidence="2">
    <location>
        <begin position="100"/>
        <end position="113"/>
    </location>
</feature>
<feature type="disulfide bond" evidence="2">
    <location>
        <begin position="115"/>
        <end position="127"/>
    </location>
</feature>
<feature type="disulfide bond" evidence="2">
    <location>
        <begin position="173"/>
        <end position="186"/>
    </location>
</feature>
<feature type="disulfide bond" evidence="2">
    <location>
        <begin position="180"/>
        <end position="195"/>
    </location>
</feature>
<feature type="disulfide bond" evidence="2">
    <location>
        <begin position="197"/>
        <end position="212"/>
    </location>
</feature>
<feature type="disulfide bond" evidence="2">
    <location>
        <begin position="218"/>
        <end position="231"/>
    </location>
</feature>
<feature type="disulfide bond" evidence="2">
    <location>
        <begin position="225"/>
        <end position="240"/>
    </location>
</feature>
<feature type="disulfide bond" evidence="2">
    <location>
        <begin position="242"/>
        <end position="253"/>
    </location>
</feature>
<feature type="splice variant" id="VSP_026989" description="In isoform 2 and isoform 4." evidence="8">
    <original>P</original>
    <variation>PFYVLRQRLARIRCQLKA</variation>
    <location>
        <position position="58"/>
    </location>
</feature>
<feature type="splice variant" id="VSP_026990" description="In isoform 3 and isoform 4." evidence="8">
    <original>Q</original>
    <variation>QDESFHPTPLDQGSEQPLFQPPDHQATNVPSR</variation>
    <location>
        <position position="88"/>
    </location>
</feature>
<feature type="mutagenesis site" description="Reduced cell spreading- and survival-promoting activities." evidence="6">
    <original>D</original>
    <variation>E</variation>
    <location>
        <position position="384"/>
    </location>
</feature>
<feature type="sequence conflict" description="In Ref. 4; AAH68308." evidence="9" ref="4">
    <original>R</original>
    <variation>G</variation>
    <location>
        <position position="24"/>
    </location>
</feature>
<keyword id="KW-0025">Alternative splicing</keyword>
<keyword id="KW-0106">Calcium</keyword>
<keyword id="KW-0130">Cell adhesion</keyword>
<keyword id="KW-0217">Developmental protein</keyword>
<keyword id="KW-0221">Differentiation</keyword>
<keyword id="KW-1015">Disulfide bond</keyword>
<keyword id="KW-0245">EGF-like domain</keyword>
<keyword id="KW-0272">Extracellular matrix</keyword>
<keyword id="KW-1185">Reference proteome</keyword>
<keyword id="KW-0677">Repeat</keyword>
<keyword id="KW-0964">Secreted</keyword>
<keyword id="KW-0732">Signal</keyword>
<reference key="1">
    <citation type="journal article" date="2001" name="J. Biol. Chem.">
        <title>Molecular cloning of POEM: a novel adhesion molecule that interacts with alpha8beta1 integrin.</title>
        <authorList>
            <person name="Morimura N."/>
            <person name="Tezuka Y."/>
            <person name="Watanabe N."/>
            <person name="Yasuda M."/>
            <person name="Miyatani S."/>
            <person name="Hozumi N."/>
            <person name="Tezuka Ki K."/>
        </authorList>
    </citation>
    <scope>NUCLEOTIDE SEQUENCE [MRNA] (ISOFORM 1)</scope>
    <scope>FUNCTION</scope>
    <scope>OLIGOMERIZATION</scope>
    <scope>SUBCELLULAR LOCATION</scope>
    <scope>DEVELOPMENTAL STAGE</scope>
    <scope>MUTAGENESIS OF ASP-384</scope>
    <source>
        <strain>C57BL/6J</strain>
        <tissue>Preosteoblast</tissue>
    </source>
</reference>
<reference key="2">
    <citation type="journal article" date="2001" name="J. Cell Biol.">
        <title>Identification and characterization of a novel extracellular matrix protein nephronectin that is associated with integrin alpha8beta1 in the embryonic kidney.</title>
        <authorList>
            <person name="Brandenberger R."/>
            <person name="Schmidt A."/>
            <person name="Linton J."/>
            <person name="Wang D."/>
            <person name="Backus C."/>
            <person name="Denda S."/>
            <person name="Mueller U."/>
            <person name="Reichardt L.F."/>
        </authorList>
    </citation>
    <scope>NUCLEOTIDE SEQUENCE [MRNA] (ISOFORMS 1; 2; 3 AND 4)</scope>
    <scope>FUNCTION</scope>
    <scope>SUBCELLULAR LOCATION</scope>
    <scope>TISSUE SPECIFICITY</scope>
    <scope>DEVELOPMENTAL STAGE</scope>
    <source>
        <strain>C57BL/6J</strain>
        <strain>NIH Swiss</strain>
        <tissue>Kidney</tissue>
    </source>
</reference>
<reference key="3">
    <citation type="journal article" date="2005" name="Science">
        <title>The transcriptional landscape of the mammalian genome.</title>
        <authorList>
            <person name="Carninci P."/>
            <person name="Kasukawa T."/>
            <person name="Katayama S."/>
            <person name="Gough J."/>
            <person name="Frith M.C."/>
            <person name="Maeda N."/>
            <person name="Oyama R."/>
            <person name="Ravasi T."/>
            <person name="Lenhard B."/>
            <person name="Wells C."/>
            <person name="Kodzius R."/>
            <person name="Shimokawa K."/>
            <person name="Bajic V.B."/>
            <person name="Brenner S.E."/>
            <person name="Batalov S."/>
            <person name="Forrest A.R."/>
            <person name="Zavolan M."/>
            <person name="Davis M.J."/>
            <person name="Wilming L.G."/>
            <person name="Aidinis V."/>
            <person name="Allen J.E."/>
            <person name="Ambesi-Impiombato A."/>
            <person name="Apweiler R."/>
            <person name="Aturaliya R.N."/>
            <person name="Bailey T.L."/>
            <person name="Bansal M."/>
            <person name="Baxter L."/>
            <person name="Beisel K.W."/>
            <person name="Bersano T."/>
            <person name="Bono H."/>
            <person name="Chalk A.M."/>
            <person name="Chiu K.P."/>
            <person name="Choudhary V."/>
            <person name="Christoffels A."/>
            <person name="Clutterbuck D.R."/>
            <person name="Crowe M.L."/>
            <person name="Dalla E."/>
            <person name="Dalrymple B.P."/>
            <person name="de Bono B."/>
            <person name="Della Gatta G."/>
            <person name="di Bernardo D."/>
            <person name="Down T."/>
            <person name="Engstrom P."/>
            <person name="Fagiolini M."/>
            <person name="Faulkner G."/>
            <person name="Fletcher C.F."/>
            <person name="Fukushima T."/>
            <person name="Furuno M."/>
            <person name="Futaki S."/>
            <person name="Gariboldi M."/>
            <person name="Georgii-Hemming P."/>
            <person name="Gingeras T.R."/>
            <person name="Gojobori T."/>
            <person name="Green R.E."/>
            <person name="Gustincich S."/>
            <person name="Harbers M."/>
            <person name="Hayashi Y."/>
            <person name="Hensch T.K."/>
            <person name="Hirokawa N."/>
            <person name="Hill D."/>
            <person name="Huminiecki L."/>
            <person name="Iacono M."/>
            <person name="Ikeo K."/>
            <person name="Iwama A."/>
            <person name="Ishikawa T."/>
            <person name="Jakt M."/>
            <person name="Kanapin A."/>
            <person name="Katoh M."/>
            <person name="Kawasawa Y."/>
            <person name="Kelso J."/>
            <person name="Kitamura H."/>
            <person name="Kitano H."/>
            <person name="Kollias G."/>
            <person name="Krishnan S.P."/>
            <person name="Kruger A."/>
            <person name="Kummerfeld S.K."/>
            <person name="Kurochkin I.V."/>
            <person name="Lareau L.F."/>
            <person name="Lazarevic D."/>
            <person name="Lipovich L."/>
            <person name="Liu J."/>
            <person name="Liuni S."/>
            <person name="McWilliam S."/>
            <person name="Madan Babu M."/>
            <person name="Madera M."/>
            <person name="Marchionni L."/>
            <person name="Matsuda H."/>
            <person name="Matsuzawa S."/>
            <person name="Miki H."/>
            <person name="Mignone F."/>
            <person name="Miyake S."/>
            <person name="Morris K."/>
            <person name="Mottagui-Tabar S."/>
            <person name="Mulder N."/>
            <person name="Nakano N."/>
            <person name="Nakauchi H."/>
            <person name="Ng P."/>
            <person name="Nilsson R."/>
            <person name="Nishiguchi S."/>
            <person name="Nishikawa S."/>
            <person name="Nori F."/>
            <person name="Ohara O."/>
            <person name="Okazaki Y."/>
            <person name="Orlando V."/>
            <person name="Pang K.C."/>
            <person name="Pavan W.J."/>
            <person name="Pavesi G."/>
            <person name="Pesole G."/>
            <person name="Petrovsky N."/>
            <person name="Piazza S."/>
            <person name="Reed J."/>
            <person name="Reid J.F."/>
            <person name="Ring B.Z."/>
            <person name="Ringwald M."/>
            <person name="Rost B."/>
            <person name="Ruan Y."/>
            <person name="Salzberg S.L."/>
            <person name="Sandelin A."/>
            <person name="Schneider C."/>
            <person name="Schoenbach C."/>
            <person name="Sekiguchi K."/>
            <person name="Semple C.A."/>
            <person name="Seno S."/>
            <person name="Sessa L."/>
            <person name="Sheng Y."/>
            <person name="Shibata Y."/>
            <person name="Shimada H."/>
            <person name="Shimada K."/>
            <person name="Silva D."/>
            <person name="Sinclair B."/>
            <person name="Sperling S."/>
            <person name="Stupka E."/>
            <person name="Sugiura K."/>
            <person name="Sultana R."/>
            <person name="Takenaka Y."/>
            <person name="Taki K."/>
            <person name="Tammoja K."/>
            <person name="Tan S.L."/>
            <person name="Tang S."/>
            <person name="Taylor M.S."/>
            <person name="Tegner J."/>
            <person name="Teichmann S.A."/>
            <person name="Ueda H.R."/>
            <person name="van Nimwegen E."/>
            <person name="Verardo R."/>
            <person name="Wei C.L."/>
            <person name="Yagi K."/>
            <person name="Yamanishi H."/>
            <person name="Zabarovsky E."/>
            <person name="Zhu S."/>
            <person name="Zimmer A."/>
            <person name="Hide W."/>
            <person name="Bult C."/>
            <person name="Grimmond S.M."/>
            <person name="Teasdale R.D."/>
            <person name="Liu E.T."/>
            <person name="Brusic V."/>
            <person name="Quackenbush J."/>
            <person name="Wahlestedt C."/>
            <person name="Mattick J.S."/>
            <person name="Hume D.A."/>
            <person name="Kai C."/>
            <person name="Sasaki D."/>
            <person name="Tomaru Y."/>
            <person name="Fukuda S."/>
            <person name="Kanamori-Katayama M."/>
            <person name="Suzuki M."/>
            <person name="Aoki J."/>
            <person name="Arakawa T."/>
            <person name="Iida J."/>
            <person name="Imamura K."/>
            <person name="Itoh M."/>
            <person name="Kato T."/>
            <person name="Kawaji H."/>
            <person name="Kawagashira N."/>
            <person name="Kawashima T."/>
            <person name="Kojima M."/>
            <person name="Kondo S."/>
            <person name="Konno H."/>
            <person name="Nakano K."/>
            <person name="Ninomiya N."/>
            <person name="Nishio T."/>
            <person name="Okada M."/>
            <person name="Plessy C."/>
            <person name="Shibata K."/>
            <person name="Shiraki T."/>
            <person name="Suzuki S."/>
            <person name="Tagami M."/>
            <person name="Waki K."/>
            <person name="Watahiki A."/>
            <person name="Okamura-Oho Y."/>
            <person name="Suzuki H."/>
            <person name="Kawai J."/>
            <person name="Hayashizaki Y."/>
        </authorList>
    </citation>
    <scope>NUCLEOTIDE SEQUENCE [LARGE SCALE MRNA] (ISOFORM 1)</scope>
    <source>
        <strain>C57BL/6J</strain>
        <tissue>Pancreas</tissue>
    </source>
</reference>
<reference key="4">
    <citation type="journal article" date="2004" name="Genome Res.">
        <title>The status, quality, and expansion of the NIH full-length cDNA project: the Mammalian Gene Collection (MGC).</title>
        <authorList>
            <consortium name="The MGC Project Team"/>
        </authorList>
    </citation>
    <scope>NUCLEOTIDE SEQUENCE [LARGE SCALE MRNA] (ISOFORM 1)</scope>
    <source>
        <strain>C57BL/6J</strain>
        <tissue>Kidney</tissue>
        <tissue>Mammary tumor</tissue>
    </source>
</reference>
<reference key="5">
    <citation type="journal article" date="2007" name="Development">
        <title>The ECM protein nephronectin promotes kidney development via integrin alpha8beta1-mediated stimulation of Gdnf expression.</title>
        <authorList>
            <person name="Linton J.M."/>
            <person name="Martin G.R."/>
            <person name="Reichardt L.F."/>
        </authorList>
    </citation>
    <scope>FUNCTION</scope>
    <scope>DISRUPTION PHENOTYPE</scope>
</reference>
<reference key="6">
    <citation type="journal article" date="2010" name="Cell">
        <title>A tissue-specific atlas of mouse protein phosphorylation and expression.</title>
        <authorList>
            <person name="Huttlin E.L."/>
            <person name="Jedrychowski M.P."/>
            <person name="Elias J.E."/>
            <person name="Goswami T."/>
            <person name="Rad R."/>
            <person name="Beausoleil S.A."/>
            <person name="Villen J."/>
            <person name="Haas W."/>
            <person name="Sowa M.E."/>
            <person name="Gygi S.P."/>
        </authorList>
    </citation>
    <scope>IDENTIFICATION BY MASS SPECTROMETRY [LARGE SCALE ANALYSIS]</scope>
    <source>
        <tissue>Lung</tissue>
    </source>
</reference>
<dbReference type="EMBL" id="AB059656">
    <property type="protein sequence ID" value="BAB69692.1"/>
    <property type="molecule type" value="mRNA"/>
</dbReference>
<dbReference type="EMBL" id="AF397007">
    <property type="protein sequence ID" value="AAK84391.1"/>
    <property type="molecule type" value="mRNA"/>
</dbReference>
<dbReference type="EMBL" id="AF397008">
    <property type="protein sequence ID" value="AAK84392.1"/>
    <property type="molecule type" value="mRNA"/>
</dbReference>
<dbReference type="EMBL" id="AY035898">
    <property type="protein sequence ID" value="AAK96010.1"/>
    <property type="molecule type" value="mRNA"/>
</dbReference>
<dbReference type="EMBL" id="AY035899">
    <property type="protein sequence ID" value="AAK96011.1"/>
    <property type="molecule type" value="mRNA"/>
</dbReference>
<dbReference type="EMBL" id="AK050484">
    <property type="protein sequence ID" value="BAC34283.1"/>
    <property type="molecule type" value="mRNA"/>
</dbReference>
<dbReference type="EMBL" id="BC046642">
    <property type="protein sequence ID" value="AAH46642.1"/>
    <property type="molecule type" value="mRNA"/>
</dbReference>
<dbReference type="EMBL" id="BC068308">
    <property type="protein sequence ID" value="AAH68308.1"/>
    <property type="molecule type" value="mRNA"/>
</dbReference>
<dbReference type="CCDS" id="CCDS17845.1">
    <molecule id="Q91V88-1"/>
</dbReference>
<dbReference type="CCDS" id="CCDS17846.1">
    <molecule id="Q91V88-2"/>
</dbReference>
<dbReference type="CCDS" id="CCDS71322.1">
    <molecule id="Q91V88-3"/>
</dbReference>
<dbReference type="CCDS" id="CCDS71323.1">
    <molecule id="Q91V88-4"/>
</dbReference>
<dbReference type="RefSeq" id="NP_001025007.1">
    <molecule id="Q91V88-1"/>
    <property type="nucleotide sequence ID" value="NM_001029836.2"/>
</dbReference>
<dbReference type="RefSeq" id="NP_001274030.1">
    <molecule id="Q91V88-4"/>
    <property type="nucleotide sequence ID" value="NM_001287101.1"/>
</dbReference>
<dbReference type="RefSeq" id="NP_001274031.1">
    <molecule id="Q91V88-3"/>
    <property type="nucleotide sequence ID" value="NM_001287102.1"/>
</dbReference>
<dbReference type="RefSeq" id="NP_277060.2">
    <molecule id="Q91V88-2"/>
    <property type="nucleotide sequence ID" value="NM_033525.3"/>
</dbReference>
<dbReference type="SMR" id="Q91V88"/>
<dbReference type="BioGRID" id="227625">
    <property type="interactions" value="3"/>
</dbReference>
<dbReference type="FunCoup" id="Q91V88">
    <property type="interactions" value="187"/>
</dbReference>
<dbReference type="IntAct" id="Q91V88">
    <property type="interactions" value="2"/>
</dbReference>
<dbReference type="STRING" id="10090.ENSMUSP00000091505"/>
<dbReference type="GlyGen" id="Q91V88">
    <property type="glycosylation" value="3 sites"/>
</dbReference>
<dbReference type="iPTMnet" id="Q91V88"/>
<dbReference type="PhosphoSitePlus" id="Q91V88"/>
<dbReference type="SwissPalm" id="Q91V88"/>
<dbReference type="jPOST" id="Q91V88"/>
<dbReference type="PaxDb" id="10090-ENSMUSP00000040071"/>
<dbReference type="ProteomicsDB" id="293683">
    <molecule id="Q91V88-1"/>
</dbReference>
<dbReference type="ProteomicsDB" id="293684">
    <molecule id="Q91V88-2"/>
</dbReference>
<dbReference type="ProteomicsDB" id="293685">
    <molecule id="Q91V88-3"/>
</dbReference>
<dbReference type="ProteomicsDB" id="293686">
    <molecule id="Q91V88-4"/>
</dbReference>
<dbReference type="Pumba" id="Q91V88"/>
<dbReference type="Antibodypedia" id="1021">
    <property type="antibodies" value="125 antibodies from 22 providers"/>
</dbReference>
<dbReference type="DNASU" id="114249"/>
<dbReference type="Ensembl" id="ENSMUST00000042729.16">
    <molecule id="Q91V88-2"/>
    <property type="protein sequence ID" value="ENSMUSP00000040071.10"/>
    <property type="gene ID" value="ENSMUSG00000040998.19"/>
</dbReference>
<dbReference type="Ensembl" id="ENSMUST00000042744.16">
    <molecule id="Q91V88-1"/>
    <property type="protein sequence ID" value="ENSMUSP00000040684.10"/>
    <property type="gene ID" value="ENSMUSG00000040998.19"/>
</dbReference>
<dbReference type="Ensembl" id="ENSMUST00000093971.5">
    <molecule id="Q91V88-4"/>
    <property type="protein sequence ID" value="ENSMUSP00000091505.5"/>
    <property type="gene ID" value="ENSMUSG00000040998.19"/>
</dbReference>
<dbReference type="Ensembl" id="ENSMUST00000117164.8">
    <molecule id="Q91V88-3"/>
    <property type="protein sequence ID" value="ENSMUSP00000113419.2"/>
    <property type="gene ID" value="ENSMUSG00000040998.19"/>
</dbReference>
<dbReference type="GeneID" id="114249"/>
<dbReference type="KEGG" id="mmu:114249"/>
<dbReference type="UCSC" id="uc008rkc.3">
    <molecule id="Q91V88-2"/>
    <property type="organism name" value="mouse"/>
</dbReference>
<dbReference type="UCSC" id="uc008rkd.3">
    <molecule id="Q91V88-1"/>
    <property type="organism name" value="mouse"/>
</dbReference>
<dbReference type="UCSC" id="uc008rke.3">
    <molecule id="Q91V88-4"/>
    <property type="organism name" value="mouse"/>
</dbReference>
<dbReference type="UCSC" id="uc008rkf.3">
    <molecule id="Q91V88-3"/>
    <property type="organism name" value="mouse"/>
</dbReference>
<dbReference type="AGR" id="MGI:2148811"/>
<dbReference type="CTD" id="255743"/>
<dbReference type="MGI" id="MGI:2148811">
    <property type="gene designation" value="Npnt"/>
</dbReference>
<dbReference type="VEuPathDB" id="HostDB:ENSMUSG00000040998"/>
<dbReference type="eggNOG" id="KOG1217">
    <property type="taxonomic scope" value="Eukaryota"/>
</dbReference>
<dbReference type="GeneTree" id="ENSGT00930000150973"/>
<dbReference type="InParanoid" id="Q91V88"/>
<dbReference type="OMA" id="PETCENE"/>
<dbReference type="OrthoDB" id="61127at9989"/>
<dbReference type="PhylomeDB" id="Q91V88"/>
<dbReference type="TreeFam" id="TF330819"/>
<dbReference type="BioGRID-ORCS" id="114249">
    <property type="hits" value="1 hit in 76 CRISPR screens"/>
</dbReference>
<dbReference type="PRO" id="PR:Q91V88"/>
<dbReference type="Proteomes" id="UP000000589">
    <property type="component" value="Chromosome 3"/>
</dbReference>
<dbReference type="RNAct" id="Q91V88">
    <property type="molecule type" value="protein"/>
</dbReference>
<dbReference type="Bgee" id="ENSMUSG00000040998">
    <property type="expression patterns" value="Expressed in ascending aorta and 288 other cell types or tissues"/>
</dbReference>
<dbReference type="ExpressionAtlas" id="Q91V88">
    <property type="expression patterns" value="baseline and differential"/>
</dbReference>
<dbReference type="GO" id="GO:0005604">
    <property type="term" value="C:basement membrane"/>
    <property type="evidence" value="ECO:0000314"/>
    <property type="project" value="BHF-UCL"/>
</dbReference>
<dbReference type="GO" id="GO:0062023">
    <property type="term" value="C:collagen-containing extracellular matrix"/>
    <property type="evidence" value="ECO:0007005"/>
    <property type="project" value="BHF-UCL"/>
</dbReference>
<dbReference type="GO" id="GO:0031012">
    <property type="term" value="C:extracellular matrix"/>
    <property type="evidence" value="ECO:0000314"/>
    <property type="project" value="MGI"/>
</dbReference>
<dbReference type="GO" id="GO:0005576">
    <property type="term" value="C:extracellular region"/>
    <property type="evidence" value="ECO:0000314"/>
    <property type="project" value="BHF-UCL"/>
</dbReference>
<dbReference type="GO" id="GO:0016020">
    <property type="term" value="C:membrane"/>
    <property type="evidence" value="ECO:0007669"/>
    <property type="project" value="InterPro"/>
</dbReference>
<dbReference type="GO" id="GO:0030485">
    <property type="term" value="C:smooth muscle contractile fiber"/>
    <property type="evidence" value="ECO:0000314"/>
    <property type="project" value="BHF-UCL"/>
</dbReference>
<dbReference type="GO" id="GO:0005509">
    <property type="term" value="F:calcium ion binding"/>
    <property type="evidence" value="ECO:0007669"/>
    <property type="project" value="InterPro"/>
</dbReference>
<dbReference type="GO" id="GO:0005178">
    <property type="term" value="F:integrin binding"/>
    <property type="evidence" value="ECO:0000314"/>
    <property type="project" value="BHF-UCL"/>
</dbReference>
<dbReference type="GO" id="GO:0001658">
    <property type="term" value="P:branching involved in ureteric bud morphogenesis"/>
    <property type="evidence" value="ECO:0000315"/>
    <property type="project" value="MGI"/>
</dbReference>
<dbReference type="GO" id="GO:0033631">
    <property type="term" value="P:cell-cell adhesion mediated by integrin"/>
    <property type="evidence" value="ECO:0000314"/>
    <property type="project" value="BHF-UCL"/>
</dbReference>
<dbReference type="GO" id="GO:0007160">
    <property type="term" value="P:cell-matrix adhesion"/>
    <property type="evidence" value="ECO:0000314"/>
    <property type="project" value="MGI"/>
</dbReference>
<dbReference type="GO" id="GO:0071356">
    <property type="term" value="P:cellular response to tumor necrosis factor"/>
    <property type="evidence" value="ECO:0000314"/>
    <property type="project" value="BHF-UCL"/>
</dbReference>
<dbReference type="GO" id="GO:0045184">
    <property type="term" value="P:establishment of protein localization"/>
    <property type="evidence" value="ECO:0000315"/>
    <property type="project" value="BHF-UCL"/>
</dbReference>
<dbReference type="GO" id="GO:0030198">
    <property type="term" value="P:extracellular matrix organization"/>
    <property type="evidence" value="ECO:0000314"/>
    <property type="project" value="MGI"/>
</dbReference>
<dbReference type="GO" id="GO:0097195">
    <property type="term" value="P:pilomotor reflex"/>
    <property type="evidence" value="ECO:0000315"/>
    <property type="project" value="BHF-UCL"/>
</dbReference>
<dbReference type="GO" id="GO:0010811">
    <property type="term" value="P:positive regulation of cell-substrate adhesion"/>
    <property type="evidence" value="ECO:0000314"/>
    <property type="project" value="MGI"/>
</dbReference>
<dbReference type="GO" id="GO:0070374">
    <property type="term" value="P:positive regulation of ERK1 and ERK2 cascade"/>
    <property type="evidence" value="ECO:0000314"/>
    <property type="project" value="BHF-UCL"/>
</dbReference>
<dbReference type="GO" id="GO:0045669">
    <property type="term" value="P:positive regulation of osteoblast differentiation"/>
    <property type="evidence" value="ECO:0000315"/>
    <property type="project" value="BHF-UCL"/>
</dbReference>
<dbReference type="GO" id="GO:0045987">
    <property type="term" value="P:positive regulation of smooth muscle contraction"/>
    <property type="evidence" value="ECO:0000315"/>
    <property type="project" value="BHF-UCL"/>
</dbReference>
<dbReference type="GO" id="GO:0045944">
    <property type="term" value="P:positive regulation of transcription by RNA polymerase II"/>
    <property type="evidence" value="ECO:0000314"/>
    <property type="project" value="BHF-UCL"/>
</dbReference>
<dbReference type="GO" id="GO:0030511">
    <property type="term" value="P:positive regulation of transforming growth factor beta receptor signaling pathway"/>
    <property type="evidence" value="ECO:0000315"/>
    <property type="project" value="MGI"/>
</dbReference>
<dbReference type="GO" id="GO:0051145">
    <property type="term" value="P:smooth muscle cell differentiation"/>
    <property type="evidence" value="ECO:0000314"/>
    <property type="project" value="BHF-UCL"/>
</dbReference>
<dbReference type="GO" id="GO:0007179">
    <property type="term" value="P:transforming growth factor beta receptor signaling pathway"/>
    <property type="evidence" value="ECO:0000315"/>
    <property type="project" value="MGI"/>
</dbReference>
<dbReference type="GO" id="GO:0001657">
    <property type="term" value="P:ureteric bud development"/>
    <property type="evidence" value="ECO:0000315"/>
    <property type="project" value="MGI"/>
</dbReference>
<dbReference type="CDD" id="cd00054">
    <property type="entry name" value="EGF_CA"/>
    <property type="match status" value="2"/>
</dbReference>
<dbReference type="CDD" id="cd06263">
    <property type="entry name" value="MAM"/>
    <property type="match status" value="1"/>
</dbReference>
<dbReference type="FunFam" id="2.10.25.10:FF:000038">
    <property type="entry name" value="Fibrillin 2"/>
    <property type="match status" value="1"/>
</dbReference>
<dbReference type="FunFam" id="2.10.25.10:FF:000187">
    <property type="entry name" value="nephronectin isoform X1"/>
    <property type="match status" value="1"/>
</dbReference>
<dbReference type="FunFam" id="2.10.25.10:FF:000476">
    <property type="entry name" value="nephronectin isoform X1"/>
    <property type="match status" value="1"/>
</dbReference>
<dbReference type="FunFam" id="2.60.120.200:FF:000133">
    <property type="entry name" value="nephronectin isoform X1"/>
    <property type="match status" value="1"/>
</dbReference>
<dbReference type="FunFam" id="2.10.25.10:FF:000184">
    <property type="entry name" value="nephronectin isoform X2"/>
    <property type="match status" value="1"/>
</dbReference>
<dbReference type="FunFam" id="2.10.25.10:FF:000268">
    <property type="entry name" value="nephronectin isoform X2"/>
    <property type="match status" value="1"/>
</dbReference>
<dbReference type="Gene3D" id="2.60.120.200">
    <property type="match status" value="1"/>
</dbReference>
<dbReference type="Gene3D" id="2.10.25.10">
    <property type="entry name" value="Laminin"/>
    <property type="match status" value="5"/>
</dbReference>
<dbReference type="InterPro" id="IPR013320">
    <property type="entry name" value="ConA-like_dom_sf"/>
</dbReference>
<dbReference type="InterPro" id="IPR001881">
    <property type="entry name" value="EGF-like_Ca-bd_dom"/>
</dbReference>
<dbReference type="InterPro" id="IPR000742">
    <property type="entry name" value="EGF-like_dom"/>
</dbReference>
<dbReference type="InterPro" id="IPR000152">
    <property type="entry name" value="EGF-type_Asp/Asn_hydroxyl_site"/>
</dbReference>
<dbReference type="InterPro" id="IPR018097">
    <property type="entry name" value="EGF_Ca-bd_CS"/>
</dbReference>
<dbReference type="InterPro" id="IPR009030">
    <property type="entry name" value="Growth_fac_rcpt_cys_sf"/>
</dbReference>
<dbReference type="InterPro" id="IPR000998">
    <property type="entry name" value="MAM_dom"/>
</dbReference>
<dbReference type="InterPro" id="IPR052235">
    <property type="entry name" value="Nephronectin_domain"/>
</dbReference>
<dbReference type="InterPro" id="IPR049883">
    <property type="entry name" value="NOTCH1_EGF-like"/>
</dbReference>
<dbReference type="PANTHER" id="PTHR24050:SF19">
    <property type="entry name" value="NEPHRONECTIN"/>
    <property type="match status" value="1"/>
</dbReference>
<dbReference type="PANTHER" id="PTHR24050">
    <property type="entry name" value="PA14 DOMAIN-CONTAINING PROTEIN"/>
    <property type="match status" value="1"/>
</dbReference>
<dbReference type="Pfam" id="PF07645">
    <property type="entry name" value="EGF_CA"/>
    <property type="match status" value="3"/>
</dbReference>
<dbReference type="Pfam" id="PF00629">
    <property type="entry name" value="MAM"/>
    <property type="match status" value="1"/>
</dbReference>
<dbReference type="SMART" id="SM00181">
    <property type="entry name" value="EGF"/>
    <property type="match status" value="5"/>
</dbReference>
<dbReference type="SMART" id="SM00179">
    <property type="entry name" value="EGF_CA"/>
    <property type="match status" value="3"/>
</dbReference>
<dbReference type="SMART" id="SM00137">
    <property type="entry name" value="MAM"/>
    <property type="match status" value="1"/>
</dbReference>
<dbReference type="SUPFAM" id="SSF49899">
    <property type="entry name" value="Concanavalin A-like lectins/glucanases"/>
    <property type="match status" value="1"/>
</dbReference>
<dbReference type="SUPFAM" id="SSF57184">
    <property type="entry name" value="Growth factor receptor domain"/>
    <property type="match status" value="2"/>
</dbReference>
<dbReference type="PROSITE" id="PS00010">
    <property type="entry name" value="ASX_HYDROXYL"/>
    <property type="match status" value="3"/>
</dbReference>
<dbReference type="PROSITE" id="PS00022">
    <property type="entry name" value="EGF_1"/>
    <property type="match status" value="1"/>
</dbReference>
<dbReference type="PROSITE" id="PS01186">
    <property type="entry name" value="EGF_2"/>
    <property type="match status" value="3"/>
</dbReference>
<dbReference type="PROSITE" id="PS50026">
    <property type="entry name" value="EGF_3"/>
    <property type="match status" value="4"/>
</dbReference>
<dbReference type="PROSITE" id="PS01187">
    <property type="entry name" value="EGF_CA"/>
    <property type="match status" value="3"/>
</dbReference>
<dbReference type="PROSITE" id="PS50060">
    <property type="entry name" value="MAM_2"/>
    <property type="match status" value="1"/>
</dbReference>
<evidence type="ECO:0000255" key="1"/>
<evidence type="ECO:0000255" key="2">
    <source>
        <dbReference type="PROSITE-ProRule" id="PRU00076"/>
    </source>
</evidence>
<evidence type="ECO:0000255" key="3">
    <source>
        <dbReference type="PROSITE-ProRule" id="PRU00128"/>
    </source>
</evidence>
<evidence type="ECO:0000256" key="4">
    <source>
        <dbReference type="SAM" id="MobiDB-lite"/>
    </source>
</evidence>
<evidence type="ECO:0000269" key="5">
    <source>
    </source>
</evidence>
<evidence type="ECO:0000269" key="6">
    <source>
    </source>
</evidence>
<evidence type="ECO:0000269" key="7">
    <source>
    </source>
</evidence>
<evidence type="ECO:0000303" key="8">
    <source>
    </source>
</evidence>
<evidence type="ECO:0000305" key="9"/>
<accession>Q91V88</accession>
<accession>Q6NV58</accession>
<accession>Q80VP6</accession>
<accession>Q91XL5</accession>
<accession>Q91ZD3</accession>
<accession>Q923T5</accession>
<organism>
    <name type="scientific">Mus musculus</name>
    <name type="common">Mouse</name>
    <dbReference type="NCBI Taxonomy" id="10090"/>
    <lineage>
        <taxon>Eukaryota</taxon>
        <taxon>Metazoa</taxon>
        <taxon>Chordata</taxon>
        <taxon>Craniata</taxon>
        <taxon>Vertebrata</taxon>
        <taxon>Euteleostomi</taxon>
        <taxon>Mammalia</taxon>
        <taxon>Eutheria</taxon>
        <taxon>Euarchontoglires</taxon>
        <taxon>Glires</taxon>
        <taxon>Rodentia</taxon>
        <taxon>Myomorpha</taxon>
        <taxon>Muroidea</taxon>
        <taxon>Muridae</taxon>
        <taxon>Murinae</taxon>
        <taxon>Mus</taxon>
        <taxon>Mus</taxon>
    </lineage>
</organism>
<comment type="function">
    <text evidence="5 6 7">Functional ligand of integrin alpha-8/beta-1 in kidney development. Regulates the expression of GDNF with integrin alpha-8/beta-1 which is essential for kidney development. May also play a role in the development and function of various tissues, regulating cell adhesion, spreading and survival through the binding of several integrins.</text>
</comment>
<comment type="subunit">
    <text>Homodimer and homotrimer.</text>
</comment>
<comment type="subcellular location">
    <subcellularLocation>
        <location evidence="5 6">Secreted</location>
        <location evidence="5 6">Extracellular space</location>
        <location evidence="5 6">Extracellular matrix</location>
    </subcellularLocation>
    <text>Trapped on the cell surface or in the extracellular matrix.</text>
</comment>
<comment type="alternative products">
    <event type="alternative splicing"/>
    <isoform>
        <id>Q91V88-1</id>
        <name>1</name>
        <name>Short</name>
        <sequence type="displayed"/>
    </isoform>
    <isoform>
        <id>Q91V88-2</id>
        <name>2</name>
        <name>Long</name>
        <sequence type="described" ref="VSP_026989"/>
    </isoform>
    <isoform>
        <id>Q91V88-3</id>
        <name>3</name>
        <sequence type="described" ref="VSP_026990"/>
    </isoform>
    <isoform>
        <id>Q91V88-4</id>
        <name>4</name>
        <sequence type="described" ref="VSP_026989 VSP_026990"/>
    </isoform>
</comment>
<comment type="tissue specificity">
    <text evidence="5">Expressed in kidney (at protein level).</text>
</comment>
<comment type="developmental stage">
    <text evidence="5 6">Expressed from 10.5 dpc onward mainly at epithelial-mesenchymal interfaces in kidney and other tissues undergoing morphogenesis (at protein level).</text>
</comment>
<comment type="domain">
    <text>The MAM domain is required for localization at the cell surface.</text>
</comment>
<comment type="disruption phenotype">
    <text evidence="7">Mice display renal agenesis at birth due to a developmental delay. This delay is associated with a reduced expression of Gdnf and is similar to the one found in mice lacking Itga8.</text>
</comment>
<comment type="miscellaneous">
    <text>Was named nephronectin based on its potential role in kidney development.</text>
</comment>
<comment type="similarity">
    <text evidence="9">Belongs to the nephronectin family.</text>
</comment>
<name>NPNT_MOUSE</name>
<protein>
    <recommendedName>
        <fullName>Nephronectin</fullName>
    </recommendedName>
    <alternativeName>
        <fullName>Preosteoblast EGF-like repeat protein with MAM domain</fullName>
    </alternativeName>
</protein>
<gene>
    <name type="primary">Npnt</name>
    <name type="synonym">Neph1</name>
    <name type="synonym">Poem</name>
</gene>
<sequence length="561" mass="61490">MAVLLAAVLASSLYLQVAADFDGRWPRQIVSSIGLCRYGGRIDCCWGWARQSWGQCQPVCQPQCKHGECVGPNKCKCHPGFAGKTCNQDLNECGLKPRPCKHRCMNTFGSYKCYCLNGYMLLPDGSCSSALSCSMANCQYGCDVVKGQVRCQCPSPGLQLAPDGRTCVDIDECATGRVSCPRFRQCVNTFGSYICKCHTGFDLMYIGGKYQCHDIDECSLGQHQCSSYARCYNIHGSYKCQCRDGYEGDGLNCVYIPKVMIEPSGPIHMPERNGTISKGDGGHANRIPDAGSTRWPLKTPYIPPVITNRPTSKPTTRPTPNPTPQPTPPPPPPLPTEPRTTPLPPTPERPSTRPTTIAPATSTTTRVITVDNRIQTDPQKPRGDVFIPRQPTNDLFEIFEIERGVSADEEVKDDPGILIHSCNFDHGLCGWIREKDSDLHWETARDPAGGQYLTVSAAKAPGGKAARLVLRLGHLMHSGDLCLSFRHKVTGLHSGTLQVFVRKHGTHGAALWGRNGGHGWRQTQITLRGADVKSVIFKGEKRRGHTGEIGLDDVSLKRGRC</sequence>
<proteinExistence type="evidence at protein level"/>